<gene>
    <name evidence="1" type="primary">dnaJ</name>
    <name type="ordered locus">BMEA_A2188</name>
</gene>
<evidence type="ECO:0000255" key="1">
    <source>
        <dbReference type="HAMAP-Rule" id="MF_01152"/>
    </source>
</evidence>
<protein>
    <recommendedName>
        <fullName evidence="1">Chaperone protein DnaJ</fullName>
    </recommendedName>
</protein>
<proteinExistence type="inferred from homology"/>
<feature type="chain" id="PRO_1000164244" description="Chaperone protein DnaJ">
    <location>
        <begin position="1"/>
        <end position="377"/>
    </location>
</feature>
<feature type="domain" description="J" evidence="1">
    <location>
        <begin position="4"/>
        <end position="69"/>
    </location>
</feature>
<feature type="repeat" description="CXXCXGXG motif">
    <location>
        <begin position="148"/>
        <end position="155"/>
    </location>
</feature>
<feature type="repeat" description="CXXCXGXG motif">
    <location>
        <begin position="165"/>
        <end position="172"/>
    </location>
</feature>
<feature type="repeat" description="CXXCXGXG motif">
    <location>
        <begin position="187"/>
        <end position="194"/>
    </location>
</feature>
<feature type="repeat" description="CXXCXGXG motif">
    <location>
        <begin position="201"/>
        <end position="208"/>
    </location>
</feature>
<feature type="zinc finger region" description="CR-type" evidence="1">
    <location>
        <begin position="135"/>
        <end position="213"/>
    </location>
</feature>
<feature type="binding site" evidence="1">
    <location>
        <position position="148"/>
    </location>
    <ligand>
        <name>Zn(2+)</name>
        <dbReference type="ChEBI" id="CHEBI:29105"/>
        <label>1</label>
    </ligand>
</feature>
<feature type="binding site" evidence="1">
    <location>
        <position position="151"/>
    </location>
    <ligand>
        <name>Zn(2+)</name>
        <dbReference type="ChEBI" id="CHEBI:29105"/>
        <label>1</label>
    </ligand>
</feature>
<feature type="binding site" evidence="1">
    <location>
        <position position="165"/>
    </location>
    <ligand>
        <name>Zn(2+)</name>
        <dbReference type="ChEBI" id="CHEBI:29105"/>
        <label>2</label>
    </ligand>
</feature>
<feature type="binding site" evidence="1">
    <location>
        <position position="168"/>
    </location>
    <ligand>
        <name>Zn(2+)</name>
        <dbReference type="ChEBI" id="CHEBI:29105"/>
        <label>2</label>
    </ligand>
</feature>
<feature type="binding site" evidence="1">
    <location>
        <position position="187"/>
    </location>
    <ligand>
        <name>Zn(2+)</name>
        <dbReference type="ChEBI" id="CHEBI:29105"/>
        <label>2</label>
    </ligand>
</feature>
<feature type="binding site" evidence="1">
    <location>
        <position position="190"/>
    </location>
    <ligand>
        <name>Zn(2+)</name>
        <dbReference type="ChEBI" id="CHEBI:29105"/>
        <label>2</label>
    </ligand>
</feature>
<feature type="binding site" evidence="1">
    <location>
        <position position="201"/>
    </location>
    <ligand>
        <name>Zn(2+)</name>
        <dbReference type="ChEBI" id="CHEBI:29105"/>
        <label>1</label>
    </ligand>
</feature>
<feature type="binding site" evidence="1">
    <location>
        <position position="204"/>
    </location>
    <ligand>
        <name>Zn(2+)</name>
        <dbReference type="ChEBI" id="CHEBI:29105"/>
        <label>1</label>
    </ligand>
</feature>
<dbReference type="EMBL" id="CP001488">
    <property type="protein sequence ID" value="ACO01833.1"/>
    <property type="molecule type" value="Genomic_DNA"/>
</dbReference>
<dbReference type="RefSeq" id="WP_004684564.1">
    <property type="nucleotide sequence ID" value="NC_012441.1"/>
</dbReference>
<dbReference type="SMR" id="C0RG11"/>
<dbReference type="GeneID" id="55591692"/>
<dbReference type="KEGG" id="bmi:BMEA_A2188"/>
<dbReference type="HOGENOM" id="CLU_017633_0_7_5"/>
<dbReference type="PRO" id="PR:C0RG11"/>
<dbReference type="Proteomes" id="UP000001748">
    <property type="component" value="Chromosome I"/>
</dbReference>
<dbReference type="GO" id="GO:0005737">
    <property type="term" value="C:cytoplasm"/>
    <property type="evidence" value="ECO:0007669"/>
    <property type="project" value="UniProtKB-SubCell"/>
</dbReference>
<dbReference type="GO" id="GO:0005524">
    <property type="term" value="F:ATP binding"/>
    <property type="evidence" value="ECO:0007669"/>
    <property type="project" value="InterPro"/>
</dbReference>
<dbReference type="GO" id="GO:0031072">
    <property type="term" value="F:heat shock protein binding"/>
    <property type="evidence" value="ECO:0007669"/>
    <property type="project" value="InterPro"/>
</dbReference>
<dbReference type="GO" id="GO:0051082">
    <property type="term" value="F:unfolded protein binding"/>
    <property type="evidence" value="ECO:0007669"/>
    <property type="project" value="UniProtKB-UniRule"/>
</dbReference>
<dbReference type="GO" id="GO:0008270">
    <property type="term" value="F:zinc ion binding"/>
    <property type="evidence" value="ECO:0007669"/>
    <property type="project" value="UniProtKB-UniRule"/>
</dbReference>
<dbReference type="GO" id="GO:0051085">
    <property type="term" value="P:chaperone cofactor-dependent protein refolding"/>
    <property type="evidence" value="ECO:0007669"/>
    <property type="project" value="TreeGrafter"/>
</dbReference>
<dbReference type="GO" id="GO:0006260">
    <property type="term" value="P:DNA replication"/>
    <property type="evidence" value="ECO:0007669"/>
    <property type="project" value="UniProtKB-KW"/>
</dbReference>
<dbReference type="GO" id="GO:0042026">
    <property type="term" value="P:protein refolding"/>
    <property type="evidence" value="ECO:0007669"/>
    <property type="project" value="TreeGrafter"/>
</dbReference>
<dbReference type="GO" id="GO:0009408">
    <property type="term" value="P:response to heat"/>
    <property type="evidence" value="ECO:0007669"/>
    <property type="project" value="InterPro"/>
</dbReference>
<dbReference type="CDD" id="cd06257">
    <property type="entry name" value="DnaJ"/>
    <property type="match status" value="1"/>
</dbReference>
<dbReference type="CDD" id="cd10747">
    <property type="entry name" value="DnaJ_C"/>
    <property type="match status" value="1"/>
</dbReference>
<dbReference type="CDD" id="cd10719">
    <property type="entry name" value="DnaJ_zf"/>
    <property type="match status" value="1"/>
</dbReference>
<dbReference type="FunFam" id="1.10.287.110:FF:000034">
    <property type="entry name" value="Chaperone protein DnaJ"/>
    <property type="match status" value="1"/>
</dbReference>
<dbReference type="FunFam" id="2.10.230.10:FF:000002">
    <property type="entry name" value="Molecular chaperone DnaJ"/>
    <property type="match status" value="1"/>
</dbReference>
<dbReference type="FunFam" id="2.60.260.20:FF:000004">
    <property type="entry name" value="Molecular chaperone DnaJ"/>
    <property type="match status" value="1"/>
</dbReference>
<dbReference type="Gene3D" id="1.10.287.110">
    <property type="entry name" value="DnaJ domain"/>
    <property type="match status" value="1"/>
</dbReference>
<dbReference type="Gene3D" id="2.10.230.10">
    <property type="entry name" value="Heat shock protein DnaJ, cysteine-rich domain"/>
    <property type="match status" value="1"/>
</dbReference>
<dbReference type="Gene3D" id="2.60.260.20">
    <property type="entry name" value="Urease metallochaperone UreE, N-terminal domain"/>
    <property type="match status" value="2"/>
</dbReference>
<dbReference type="HAMAP" id="MF_01152">
    <property type="entry name" value="DnaJ"/>
    <property type="match status" value="1"/>
</dbReference>
<dbReference type="InterPro" id="IPR012724">
    <property type="entry name" value="DnaJ"/>
</dbReference>
<dbReference type="InterPro" id="IPR002939">
    <property type="entry name" value="DnaJ_C"/>
</dbReference>
<dbReference type="InterPro" id="IPR001623">
    <property type="entry name" value="DnaJ_domain"/>
</dbReference>
<dbReference type="InterPro" id="IPR018253">
    <property type="entry name" value="DnaJ_domain_CS"/>
</dbReference>
<dbReference type="InterPro" id="IPR008971">
    <property type="entry name" value="HSP40/DnaJ_pept-bd"/>
</dbReference>
<dbReference type="InterPro" id="IPR001305">
    <property type="entry name" value="HSP_DnaJ_Cys-rich_dom"/>
</dbReference>
<dbReference type="InterPro" id="IPR036410">
    <property type="entry name" value="HSP_DnaJ_Cys-rich_dom_sf"/>
</dbReference>
<dbReference type="InterPro" id="IPR036869">
    <property type="entry name" value="J_dom_sf"/>
</dbReference>
<dbReference type="NCBIfam" id="TIGR02349">
    <property type="entry name" value="DnaJ_bact"/>
    <property type="match status" value="1"/>
</dbReference>
<dbReference type="NCBIfam" id="NF008035">
    <property type="entry name" value="PRK10767.1"/>
    <property type="match status" value="1"/>
</dbReference>
<dbReference type="PANTHER" id="PTHR43096:SF48">
    <property type="entry name" value="CHAPERONE PROTEIN DNAJ"/>
    <property type="match status" value="1"/>
</dbReference>
<dbReference type="PANTHER" id="PTHR43096">
    <property type="entry name" value="DNAJ HOMOLOG 1, MITOCHONDRIAL-RELATED"/>
    <property type="match status" value="1"/>
</dbReference>
<dbReference type="Pfam" id="PF00226">
    <property type="entry name" value="DnaJ"/>
    <property type="match status" value="1"/>
</dbReference>
<dbReference type="Pfam" id="PF01556">
    <property type="entry name" value="DnaJ_C"/>
    <property type="match status" value="1"/>
</dbReference>
<dbReference type="Pfam" id="PF00684">
    <property type="entry name" value="DnaJ_CXXCXGXG"/>
    <property type="match status" value="1"/>
</dbReference>
<dbReference type="PRINTS" id="PR00625">
    <property type="entry name" value="JDOMAIN"/>
</dbReference>
<dbReference type="SMART" id="SM00271">
    <property type="entry name" value="DnaJ"/>
    <property type="match status" value="1"/>
</dbReference>
<dbReference type="SUPFAM" id="SSF46565">
    <property type="entry name" value="Chaperone J-domain"/>
    <property type="match status" value="1"/>
</dbReference>
<dbReference type="SUPFAM" id="SSF57938">
    <property type="entry name" value="DnaJ/Hsp40 cysteine-rich domain"/>
    <property type="match status" value="1"/>
</dbReference>
<dbReference type="SUPFAM" id="SSF49493">
    <property type="entry name" value="HSP40/DnaJ peptide-binding domain"/>
    <property type="match status" value="2"/>
</dbReference>
<dbReference type="PROSITE" id="PS00636">
    <property type="entry name" value="DNAJ_1"/>
    <property type="match status" value="1"/>
</dbReference>
<dbReference type="PROSITE" id="PS50076">
    <property type="entry name" value="DNAJ_2"/>
    <property type="match status" value="1"/>
</dbReference>
<dbReference type="PROSITE" id="PS51188">
    <property type="entry name" value="ZF_CR"/>
    <property type="match status" value="1"/>
</dbReference>
<name>DNAJ_BRUMB</name>
<reference key="1">
    <citation type="submission" date="2009-03" db="EMBL/GenBank/DDBJ databases">
        <title>Brucella melitensis ATCC 23457 whole genome shotgun sequencing project.</title>
        <authorList>
            <person name="Setubal J.C."/>
            <person name="Boyle S."/>
            <person name="Crasta O.R."/>
            <person name="Gillespie J.J."/>
            <person name="Kenyon R.W."/>
            <person name="Lu J."/>
            <person name="Mane S."/>
            <person name="Nagrani S."/>
            <person name="Shallom J.M."/>
            <person name="Shallom S."/>
            <person name="Shukla M."/>
            <person name="Snyder E.E."/>
            <person name="Sobral B.W."/>
            <person name="Wattam A.R."/>
            <person name="Will R."/>
            <person name="Williams K."/>
            <person name="Yoo H."/>
            <person name="Munk C."/>
            <person name="Tapia R."/>
            <person name="Han C."/>
            <person name="Detter J.C."/>
            <person name="Bruce D."/>
            <person name="Brettin T.S."/>
        </authorList>
    </citation>
    <scope>NUCLEOTIDE SEQUENCE [LARGE SCALE GENOMIC DNA]</scope>
    <source>
        <strain>ATCC 23457</strain>
    </source>
</reference>
<keyword id="KW-0143">Chaperone</keyword>
<keyword id="KW-0963">Cytoplasm</keyword>
<keyword id="KW-0235">DNA replication</keyword>
<keyword id="KW-0479">Metal-binding</keyword>
<keyword id="KW-0677">Repeat</keyword>
<keyword id="KW-0346">Stress response</keyword>
<keyword id="KW-0862">Zinc</keyword>
<keyword id="KW-0863">Zinc-finger</keyword>
<organism>
    <name type="scientific">Brucella melitensis biotype 2 (strain ATCC 23457)</name>
    <dbReference type="NCBI Taxonomy" id="546272"/>
    <lineage>
        <taxon>Bacteria</taxon>
        <taxon>Pseudomonadati</taxon>
        <taxon>Pseudomonadota</taxon>
        <taxon>Alphaproteobacteria</taxon>
        <taxon>Hyphomicrobiales</taxon>
        <taxon>Brucellaceae</taxon>
        <taxon>Brucella/Ochrobactrum group</taxon>
        <taxon>Brucella</taxon>
    </lineage>
</organism>
<accession>C0RG11</accession>
<comment type="function">
    <text evidence="1">Participates actively in the response to hyperosmotic and heat shock by preventing the aggregation of stress-denatured proteins and by disaggregating proteins, also in an autonomous, DnaK-independent fashion. Unfolded proteins bind initially to DnaJ; upon interaction with the DnaJ-bound protein, DnaK hydrolyzes its bound ATP, resulting in the formation of a stable complex. GrpE releases ADP from DnaK; ATP binding to DnaK triggers the release of the substrate protein, thus completing the reaction cycle. Several rounds of ATP-dependent interactions between DnaJ, DnaK and GrpE are required for fully efficient folding. Also involved, together with DnaK and GrpE, in the DNA replication of plasmids through activation of initiation proteins.</text>
</comment>
<comment type="cofactor">
    <cofactor evidence="1">
        <name>Zn(2+)</name>
        <dbReference type="ChEBI" id="CHEBI:29105"/>
    </cofactor>
    <text evidence="1">Binds 2 Zn(2+) ions per monomer.</text>
</comment>
<comment type="subunit">
    <text evidence="1">Homodimer.</text>
</comment>
<comment type="subcellular location">
    <subcellularLocation>
        <location evidence="1">Cytoplasm</location>
    </subcellularLocation>
</comment>
<comment type="domain">
    <text evidence="1">The J domain is necessary and sufficient to stimulate DnaK ATPase activity. Zinc center 1 plays an important role in the autonomous, DnaK-independent chaperone activity of DnaJ. Zinc center 2 is essential for interaction with DnaK and for DnaJ activity.</text>
</comment>
<comment type="similarity">
    <text evidence="1">Belongs to the DnaJ family.</text>
</comment>
<sequence length="377" mass="41078">MKIDYYEALGVTRTADDKTLKAAFRKLAMQYHPDRNPDDPEAERKFKEIGEAYETLKDPQKRAAYDRFGHAAFENGGMGGGFGNGFGGAGGFADIFEDIFGEMMGGGRRRSNGGRERGADLRYNMEVTLEEAYAGKTAQIRVPTSITCDECSGSGAKPGSQPTTCTMCSGSGRVRAAQGFFSVERTCPGCNGRGQIIKDPCEKCHGQGRVTQERSLSVNIPAGIEDGTRIRLAGEGEAGLRGGPAGDLYIFLSVKPHEFFQRDGADLYCKVPISMTTAALGGQFEVSTLDGTQTRVKVPEGTQNGKQFRLKGKGMPVLRQSVTGDLYIQIDIETPQNLSKRQRELLEEFEKLSSQENSPKSAGFFSRMKEFFEGIGE</sequence>